<reference evidence="6" key="1">
    <citation type="journal article" date="2007" name="Nature">
        <title>Evolution of genes and genomes on the Drosophila phylogeny.</title>
        <authorList>
            <consortium name="Drosophila 12 genomes consortium"/>
        </authorList>
    </citation>
    <scope>NUCLEOTIDE SEQUENCE [LARGE SCALE GENOMIC DNA]</scope>
    <source>
        <strain evidence="6">Tucson 15081-1352.22</strain>
    </source>
</reference>
<organism>
    <name type="scientific">Drosophila mojavensis</name>
    <name type="common">Fruit fly</name>
    <dbReference type="NCBI Taxonomy" id="7230"/>
    <lineage>
        <taxon>Eukaryota</taxon>
        <taxon>Metazoa</taxon>
        <taxon>Ecdysozoa</taxon>
        <taxon>Arthropoda</taxon>
        <taxon>Hexapoda</taxon>
        <taxon>Insecta</taxon>
        <taxon>Pterygota</taxon>
        <taxon>Neoptera</taxon>
        <taxon>Endopterygota</taxon>
        <taxon>Diptera</taxon>
        <taxon>Brachycera</taxon>
        <taxon>Muscomorpha</taxon>
        <taxon>Ephydroidea</taxon>
        <taxon>Drosophilidae</taxon>
        <taxon>Drosophila</taxon>
    </lineage>
</organism>
<comment type="function">
    <text evidence="1 2">Probable substrate-specific adapter of an E3 ubiquitin-protein ligase complex which mediates the ubiquitination and subsequent proteasomal degradation of target proteins. May have a role in synapse differentiation and growth (By similarity).</text>
</comment>
<comment type="pathway">
    <text evidence="2">Protein modification; protein ubiquitination.</text>
</comment>
<gene>
    <name evidence="1" type="primary">dbo</name>
    <name type="ORF">GI11691</name>
</gene>
<keyword id="KW-0009">Actin-binding</keyword>
<keyword id="KW-0880">Kelch repeat</keyword>
<keyword id="KW-1185">Reference proteome</keyword>
<keyword id="KW-0677">Repeat</keyword>
<keyword id="KW-0833">Ubl conjugation pathway</keyword>
<evidence type="ECO:0000250" key="1">
    <source>
        <dbReference type="UniProtKB" id="Q9VUU5"/>
    </source>
</evidence>
<evidence type="ECO:0000250" key="2">
    <source>
        <dbReference type="UniProtKB" id="Q9Y2M5"/>
    </source>
</evidence>
<evidence type="ECO:0000255" key="3"/>
<evidence type="ECO:0000255" key="4">
    <source>
        <dbReference type="PROSITE-ProRule" id="PRU00037"/>
    </source>
</evidence>
<evidence type="ECO:0000256" key="5">
    <source>
        <dbReference type="SAM" id="MobiDB-lite"/>
    </source>
</evidence>
<evidence type="ECO:0000312" key="6">
    <source>
        <dbReference type="EMBL" id="EDW19138.1"/>
    </source>
</evidence>
<protein>
    <recommendedName>
        <fullName evidence="1">Kelch-like protein diablo</fullName>
    </recommendedName>
</protein>
<dbReference type="EMBL" id="CH933809">
    <property type="protein sequence ID" value="EDW19138.1"/>
    <property type="molecule type" value="Genomic_DNA"/>
</dbReference>
<dbReference type="RefSeq" id="XP_002008662.2">
    <property type="nucleotide sequence ID" value="XM_002008626.2"/>
</dbReference>
<dbReference type="SMR" id="B4L0G9"/>
<dbReference type="FunCoup" id="B4L0G9">
    <property type="interactions" value="1829"/>
</dbReference>
<dbReference type="KEGG" id="dmo:Dmoj_GI11691"/>
<dbReference type="eggNOG" id="KOG4441">
    <property type="taxonomic scope" value="Eukaryota"/>
</dbReference>
<dbReference type="HOGENOM" id="CLU_004253_12_0_1"/>
<dbReference type="InParanoid" id="B4L0G9"/>
<dbReference type="OMA" id="CAVFNNL"/>
<dbReference type="OrthoDB" id="45365at2759"/>
<dbReference type="PhylomeDB" id="B4L0G9"/>
<dbReference type="UniPathway" id="UPA00143"/>
<dbReference type="Proteomes" id="UP000009192">
    <property type="component" value="Unassembled WGS sequence"/>
</dbReference>
<dbReference type="GO" id="GO:0003779">
    <property type="term" value="F:actin binding"/>
    <property type="evidence" value="ECO:0007669"/>
    <property type="project" value="UniProtKB-KW"/>
</dbReference>
<dbReference type="GO" id="GO:0045886">
    <property type="term" value="P:negative regulation of synaptic assembly at neuromuscular junction"/>
    <property type="evidence" value="ECO:0000250"/>
    <property type="project" value="UniProtKB"/>
</dbReference>
<dbReference type="GO" id="GO:0016567">
    <property type="term" value="P:protein ubiquitination"/>
    <property type="evidence" value="ECO:0007669"/>
    <property type="project" value="UniProtKB-UniPathway"/>
</dbReference>
<dbReference type="CDD" id="cd18459">
    <property type="entry name" value="BACK_KLHL20"/>
    <property type="match status" value="1"/>
</dbReference>
<dbReference type="CDD" id="cd18249">
    <property type="entry name" value="BTB_POZ_KLHL20_KLEIP"/>
    <property type="match status" value="1"/>
</dbReference>
<dbReference type="FunFam" id="1.25.40.420:FF:000001">
    <property type="entry name" value="Kelch-like family member 12"/>
    <property type="match status" value="1"/>
</dbReference>
<dbReference type="FunFam" id="2.120.10.80:FF:000006">
    <property type="entry name" value="Kelch-like family member 20"/>
    <property type="match status" value="1"/>
</dbReference>
<dbReference type="FunFam" id="3.30.710.10:FF:000001">
    <property type="entry name" value="Kelch-like family member 20"/>
    <property type="match status" value="1"/>
</dbReference>
<dbReference type="Gene3D" id="1.25.40.420">
    <property type="match status" value="1"/>
</dbReference>
<dbReference type="Gene3D" id="2.120.10.80">
    <property type="entry name" value="Kelch-type beta propeller"/>
    <property type="match status" value="1"/>
</dbReference>
<dbReference type="Gene3D" id="3.30.710.10">
    <property type="entry name" value="Potassium Channel Kv1.1, Chain A"/>
    <property type="match status" value="1"/>
</dbReference>
<dbReference type="InterPro" id="IPR011705">
    <property type="entry name" value="BACK"/>
</dbReference>
<dbReference type="InterPro" id="IPR017096">
    <property type="entry name" value="BTB-kelch_protein"/>
</dbReference>
<dbReference type="InterPro" id="IPR000210">
    <property type="entry name" value="BTB/POZ_dom"/>
</dbReference>
<dbReference type="InterPro" id="IPR011043">
    <property type="entry name" value="Gal_Oxase/kelch_b-propeller"/>
</dbReference>
<dbReference type="InterPro" id="IPR015915">
    <property type="entry name" value="Kelch-typ_b-propeller"/>
</dbReference>
<dbReference type="InterPro" id="IPR006652">
    <property type="entry name" value="Kelch_1"/>
</dbReference>
<dbReference type="InterPro" id="IPR011333">
    <property type="entry name" value="SKP1/BTB/POZ_sf"/>
</dbReference>
<dbReference type="PANTHER" id="PTHR24412">
    <property type="entry name" value="KELCH PROTEIN"/>
    <property type="match status" value="1"/>
</dbReference>
<dbReference type="PANTHER" id="PTHR24412:SF451">
    <property type="entry name" value="KELCH-LIKE PROTEIN 20"/>
    <property type="match status" value="1"/>
</dbReference>
<dbReference type="Pfam" id="PF07707">
    <property type="entry name" value="BACK"/>
    <property type="match status" value="1"/>
</dbReference>
<dbReference type="Pfam" id="PF00651">
    <property type="entry name" value="BTB"/>
    <property type="match status" value="1"/>
</dbReference>
<dbReference type="Pfam" id="PF01344">
    <property type="entry name" value="Kelch_1"/>
    <property type="match status" value="6"/>
</dbReference>
<dbReference type="PIRSF" id="PIRSF037037">
    <property type="entry name" value="Kelch-like_protein_gigaxonin"/>
    <property type="match status" value="1"/>
</dbReference>
<dbReference type="SMART" id="SM00875">
    <property type="entry name" value="BACK"/>
    <property type="match status" value="1"/>
</dbReference>
<dbReference type="SMART" id="SM00225">
    <property type="entry name" value="BTB"/>
    <property type="match status" value="1"/>
</dbReference>
<dbReference type="SMART" id="SM00612">
    <property type="entry name" value="Kelch"/>
    <property type="match status" value="6"/>
</dbReference>
<dbReference type="SUPFAM" id="SSF50965">
    <property type="entry name" value="Galactose oxidase, central domain"/>
    <property type="match status" value="1"/>
</dbReference>
<dbReference type="SUPFAM" id="SSF117281">
    <property type="entry name" value="Kelch motif"/>
    <property type="match status" value="1"/>
</dbReference>
<dbReference type="SUPFAM" id="SSF54695">
    <property type="entry name" value="POZ domain"/>
    <property type="match status" value="1"/>
</dbReference>
<dbReference type="PROSITE" id="PS50097">
    <property type="entry name" value="BTB"/>
    <property type="match status" value="1"/>
</dbReference>
<name>KLHDB_DROMO</name>
<sequence>MGDPLLPGSTGLGSGGTAAATGGTGTTGTGLGSGGTSGTERPPSPARLTHTSEKHPKVTLTELNMLRRHRELCDVVLNVGGRKIFAHRVILSACSSYFCAMFTGELEESRQTEVTIRDIDENAMELLIDFCYTAHIIVEESNVQTLLPAACLLQLVEIQDICCEFLKRQLDPTNCLGIRAFADTHSCRELLRIADKFTQHNFQEVMESEEFLLLPVGQLVDIICSDELNVRSEEQVFNAVMSWLKYNVAERRQHLAQVLQHVRLPLLSPKFLVGTVGSDLLVRSDEACRDLVDEAKNYLLLPQERPLMQGPRTRPRKPTRRGEVLFAVGGWCSGDAIASVERFDPQTNDWKMVAPMSKRRCGVGVAVLNDLLYAVGGHDGQSYLNSIERYDPQTNQWSCDVAPTTSCRTSVGVAVLDGFLYAVGGQDGVQCLNHVERYDPKENKWSKVAPMTTRRLGVAVAVLSGHLYAIGGSDGQCPLNTVERYDPRQNKWVAVNPMSTRRKHLGCAVFNNYIYAVGGRDDCMELSSAERYNPLTNTWSPIVAMTSRRSGVGLAVVNGQLYAVGGFDGSAYLKTIEVYDPETNQWRLCGCMNYRRLGGGVGVMRAPQTENYMWCAK</sequence>
<accession>B4L0G9</accession>
<feature type="chain" id="PRO_0000379949" description="Kelch-like protein diablo">
    <location>
        <begin position="1"/>
        <end position="617"/>
    </location>
</feature>
<feature type="domain" description="BTB" evidence="4">
    <location>
        <begin position="73"/>
        <end position="140"/>
    </location>
</feature>
<feature type="domain" description="BACK" evidence="3">
    <location>
        <begin position="175"/>
        <end position="277"/>
    </location>
</feature>
<feature type="repeat" description="Kelch 1" evidence="3">
    <location>
        <begin position="324"/>
        <end position="370"/>
    </location>
</feature>
<feature type="repeat" description="Kelch 2" evidence="3">
    <location>
        <begin position="372"/>
        <end position="418"/>
    </location>
</feature>
<feature type="repeat" description="Kelch 3" evidence="3">
    <location>
        <begin position="419"/>
        <end position="465"/>
    </location>
</feature>
<feature type="repeat" description="Kelch 4" evidence="3">
    <location>
        <begin position="467"/>
        <end position="512"/>
    </location>
</feature>
<feature type="repeat" description="Kelch 5" evidence="3">
    <location>
        <begin position="514"/>
        <end position="559"/>
    </location>
</feature>
<feature type="repeat" description="Kelch 6" evidence="3">
    <location>
        <begin position="560"/>
        <end position="606"/>
    </location>
</feature>
<feature type="region of interest" description="Disordered" evidence="5">
    <location>
        <begin position="1"/>
        <end position="55"/>
    </location>
</feature>
<feature type="compositionally biased region" description="Gly residues" evidence="5">
    <location>
        <begin position="10"/>
        <end position="37"/>
    </location>
</feature>
<proteinExistence type="inferred from homology"/>